<name>YP204_YEAST</name>
<keyword id="KW-0067">ATP-binding</keyword>
<keyword id="KW-0347">Helicase</keyword>
<keyword id="KW-0378">Hydrolase</keyword>
<keyword id="KW-0413">Isomerase</keyword>
<keyword id="KW-0547">Nucleotide-binding</keyword>
<keyword id="KW-1185">Reference proteome</keyword>
<dbReference type="EC" id="5.6.2.-" evidence="5"/>
<dbReference type="EMBL" id="Z73541">
    <property type="protein sequence ID" value="CAA97896.1"/>
    <property type="molecule type" value="Genomic_DNA"/>
</dbReference>
<dbReference type="EMBL" id="BK006949">
    <property type="protein sequence ID" value="DAA11618.1"/>
    <property type="molecule type" value="Genomic_DNA"/>
</dbReference>
<dbReference type="PIR" id="S65341">
    <property type="entry name" value="S65341"/>
</dbReference>
<dbReference type="RefSeq" id="NP_015530.1">
    <property type="nucleotide sequence ID" value="NM_001184301.1"/>
</dbReference>
<dbReference type="BioGRID" id="36374">
    <property type="interactions" value="4"/>
</dbReference>
<dbReference type="FunCoup" id="Q08995">
    <property type="interactions" value="64"/>
</dbReference>
<dbReference type="IntAct" id="Q08995">
    <property type="interactions" value="3"/>
</dbReference>
<dbReference type="STRING" id="4932.YPR204W"/>
<dbReference type="PaxDb" id="4932-YPR204W"/>
<dbReference type="PeptideAtlas" id="Q08995"/>
<dbReference type="EnsemblFungi" id="YPR204W_mRNA">
    <property type="protein sequence ID" value="YPR204W"/>
    <property type="gene ID" value="YPR204W"/>
</dbReference>
<dbReference type="GeneID" id="856334"/>
<dbReference type="KEGG" id="sce:YPR204W"/>
<dbReference type="AGR" id="SGD:S000006408"/>
<dbReference type="SGD" id="S000006408">
    <property type="gene designation" value="YPR204W"/>
</dbReference>
<dbReference type="VEuPathDB" id="FungiDB:YPR204W"/>
<dbReference type="eggNOG" id="ENOG502QWCT">
    <property type="taxonomic scope" value="Eukaryota"/>
</dbReference>
<dbReference type="GeneTree" id="ENSGT00940000153173"/>
<dbReference type="HOGENOM" id="CLU_011178_2_0_1"/>
<dbReference type="InParanoid" id="Q08995"/>
<dbReference type="OrthoDB" id="4054136at2759"/>
<dbReference type="BioCyc" id="YEAST:G3O-34324-MONOMER"/>
<dbReference type="Reactome" id="R-SCE-5689880">
    <property type="pathway name" value="Ub-specific processing proteases"/>
</dbReference>
<dbReference type="PRO" id="PR:Q08995"/>
<dbReference type="Proteomes" id="UP000002311">
    <property type="component" value="Chromosome XVI"/>
</dbReference>
<dbReference type="RNAct" id="Q08995">
    <property type="molecule type" value="protein"/>
</dbReference>
<dbReference type="GO" id="GO:0005737">
    <property type="term" value="C:cytoplasm"/>
    <property type="evidence" value="ECO:0000318"/>
    <property type="project" value="GO_Central"/>
</dbReference>
<dbReference type="GO" id="GO:0005524">
    <property type="term" value="F:ATP binding"/>
    <property type="evidence" value="ECO:0007669"/>
    <property type="project" value="UniProtKB-KW"/>
</dbReference>
<dbReference type="GO" id="GO:0016887">
    <property type="term" value="F:ATP hydrolysis activity"/>
    <property type="evidence" value="ECO:0007669"/>
    <property type="project" value="RHEA"/>
</dbReference>
<dbReference type="GO" id="GO:0003678">
    <property type="term" value="F:DNA helicase activity"/>
    <property type="evidence" value="ECO:0000314"/>
    <property type="project" value="SGD"/>
</dbReference>
<dbReference type="GO" id="GO:0003676">
    <property type="term" value="F:nucleic acid binding"/>
    <property type="evidence" value="ECO:0007669"/>
    <property type="project" value="InterPro"/>
</dbReference>
<dbReference type="FunFam" id="3.40.50.300:FF:001914">
    <property type="entry name" value="YML133C-like protein"/>
    <property type="match status" value="1"/>
</dbReference>
<dbReference type="FunFam" id="3.40.50.300:FF:002410">
    <property type="entry name" value="YML133C-like protein"/>
    <property type="match status" value="1"/>
</dbReference>
<dbReference type="Gene3D" id="3.40.50.300">
    <property type="entry name" value="P-loop containing nucleotide triphosphate hydrolases"/>
    <property type="match status" value="1"/>
</dbReference>
<dbReference type="InterPro" id="IPR011545">
    <property type="entry name" value="DEAD/DEAH_box_helicase_dom"/>
</dbReference>
<dbReference type="InterPro" id="IPR001650">
    <property type="entry name" value="Helicase_C-like"/>
</dbReference>
<dbReference type="InterPro" id="IPR027417">
    <property type="entry name" value="P-loop_NTPase"/>
</dbReference>
<dbReference type="InterPro" id="IPR051363">
    <property type="entry name" value="RLR_Helicase"/>
</dbReference>
<dbReference type="PANTHER" id="PTHR14074:SF39">
    <property type="entry name" value="FANCONI ANEMIA GROUP M PROTEIN"/>
    <property type="match status" value="1"/>
</dbReference>
<dbReference type="PANTHER" id="PTHR14074">
    <property type="entry name" value="HELICASE WITH DEATH DOMAIN-RELATED"/>
    <property type="match status" value="1"/>
</dbReference>
<dbReference type="Pfam" id="PF00270">
    <property type="entry name" value="DEAD"/>
    <property type="match status" value="1"/>
</dbReference>
<dbReference type="Pfam" id="PF00271">
    <property type="entry name" value="Helicase_C"/>
    <property type="match status" value="1"/>
</dbReference>
<dbReference type="SMART" id="SM00490">
    <property type="entry name" value="HELICc"/>
    <property type="match status" value="1"/>
</dbReference>
<dbReference type="SUPFAM" id="SSF52540">
    <property type="entry name" value="P-loop containing nucleoside triphosphate hydrolases"/>
    <property type="match status" value="1"/>
</dbReference>
<dbReference type="PROSITE" id="PS51192">
    <property type="entry name" value="HELICASE_ATP_BIND_1"/>
    <property type="match status" value="1"/>
</dbReference>
<dbReference type="PROSITE" id="PS51194">
    <property type="entry name" value="HELICASE_CTER"/>
    <property type="match status" value="1"/>
</dbReference>
<comment type="function">
    <text evidence="5">Catalyzes DNA unwinding and is involved in telomerase-independent telomere maintenance.</text>
</comment>
<comment type="induction">
    <text evidence="5">Induced in absence of telomerase TLC1.</text>
</comment>
<comment type="similarity">
    <text evidence="4">Belongs to the helicase family. Yeast subtelomeric Y' repeat subfamily.</text>
</comment>
<gene>
    <name type="ordered locus">YPR204W</name>
</gene>
<feature type="chain" id="PRO_0000268169" description="Y' element ATP-dependent helicase YPR204W">
    <location>
        <begin position="1"/>
        <end position="1032"/>
    </location>
</feature>
<feature type="domain" description="Helicase ATP-binding" evidence="1">
    <location>
        <begin position="1"/>
        <end position="175"/>
    </location>
</feature>
<feature type="domain" description="Helicase C-terminal" evidence="2">
    <location>
        <begin position="232"/>
        <end position="381"/>
    </location>
</feature>
<feature type="region of interest" description="Disordered" evidence="3">
    <location>
        <begin position="455"/>
        <end position="658"/>
    </location>
</feature>
<feature type="short sequence motif" description="DEAH box">
    <location>
        <begin position="121"/>
        <end position="124"/>
    </location>
</feature>
<feature type="compositionally biased region" description="Low complexity" evidence="3">
    <location>
        <begin position="455"/>
        <end position="634"/>
    </location>
</feature>
<feature type="compositionally biased region" description="Basic and acidic residues" evidence="3">
    <location>
        <begin position="635"/>
        <end position="658"/>
    </location>
</feature>
<feature type="binding site" evidence="1">
    <location>
        <begin position="11"/>
        <end position="18"/>
    </location>
    <ligand>
        <name>ATP</name>
        <dbReference type="ChEBI" id="CHEBI:30616"/>
    </ligand>
</feature>
<accession>Q08995</accession>
<accession>D6W4K2</accession>
<proteinExistence type="evidence at transcript level"/>
<protein>
    <recommendedName>
        <fullName>Y' element ATP-dependent helicase YPR204W</fullName>
        <ecNumber evidence="5">5.6.2.-</ecNumber>
    </recommendedName>
</protein>
<organism>
    <name type="scientific">Saccharomyces cerevisiae (strain ATCC 204508 / S288c)</name>
    <name type="common">Baker's yeast</name>
    <dbReference type="NCBI Taxonomy" id="559292"/>
    <lineage>
        <taxon>Eukaryota</taxon>
        <taxon>Fungi</taxon>
        <taxon>Dikarya</taxon>
        <taxon>Ascomycota</taxon>
        <taxon>Saccharomycotina</taxon>
        <taxon>Saccharomycetes</taxon>
        <taxon>Saccharomycetales</taxon>
        <taxon>Saccharomycetaceae</taxon>
        <taxon>Saccharomyces</taxon>
    </lineage>
</organism>
<evidence type="ECO:0000255" key="1">
    <source>
        <dbReference type="PROSITE-ProRule" id="PRU00541"/>
    </source>
</evidence>
<evidence type="ECO:0000255" key="2">
    <source>
        <dbReference type="PROSITE-ProRule" id="PRU00542"/>
    </source>
</evidence>
<evidence type="ECO:0000256" key="3">
    <source>
        <dbReference type="SAM" id="MobiDB-lite"/>
    </source>
</evidence>
<evidence type="ECO:0000305" key="4"/>
<evidence type="ECO:0000305" key="5">
    <source>
    </source>
</evidence>
<reference key="1">
    <citation type="journal article" date="1997" name="Nature">
        <title>The nucleotide sequence of Saccharomyces cerevisiae chromosome XVI.</title>
        <authorList>
            <person name="Bussey H."/>
            <person name="Storms R.K."/>
            <person name="Ahmed A."/>
            <person name="Albermann K."/>
            <person name="Allen E."/>
            <person name="Ansorge W."/>
            <person name="Araujo R."/>
            <person name="Aparicio A."/>
            <person name="Barrell B.G."/>
            <person name="Badcock K."/>
            <person name="Benes V."/>
            <person name="Botstein D."/>
            <person name="Bowman S."/>
            <person name="Brueckner M."/>
            <person name="Carpenter J."/>
            <person name="Cherry J.M."/>
            <person name="Chung E."/>
            <person name="Churcher C.M."/>
            <person name="Coster F."/>
            <person name="Davis K."/>
            <person name="Davis R.W."/>
            <person name="Dietrich F.S."/>
            <person name="Delius H."/>
            <person name="DiPaolo T."/>
            <person name="Dubois E."/>
            <person name="Duesterhoeft A."/>
            <person name="Duncan M."/>
            <person name="Floeth M."/>
            <person name="Fortin N."/>
            <person name="Friesen J.D."/>
            <person name="Fritz C."/>
            <person name="Goffeau A."/>
            <person name="Hall J."/>
            <person name="Hebling U."/>
            <person name="Heumann K."/>
            <person name="Hilbert H."/>
            <person name="Hillier L.W."/>
            <person name="Hunicke-Smith S."/>
            <person name="Hyman R.W."/>
            <person name="Johnston M."/>
            <person name="Kalman S."/>
            <person name="Kleine K."/>
            <person name="Komp C."/>
            <person name="Kurdi O."/>
            <person name="Lashkari D."/>
            <person name="Lew H."/>
            <person name="Lin A."/>
            <person name="Lin D."/>
            <person name="Louis E.J."/>
            <person name="Marathe R."/>
            <person name="Messenguy F."/>
            <person name="Mewes H.-W."/>
            <person name="Mirtipati S."/>
            <person name="Moestl D."/>
            <person name="Mueller-Auer S."/>
            <person name="Namath A."/>
            <person name="Nentwich U."/>
            <person name="Oefner P."/>
            <person name="Pearson D."/>
            <person name="Petel F.X."/>
            <person name="Pohl T.M."/>
            <person name="Purnelle B."/>
            <person name="Rajandream M.A."/>
            <person name="Rechmann S."/>
            <person name="Rieger M."/>
            <person name="Riles L."/>
            <person name="Roberts D."/>
            <person name="Schaefer M."/>
            <person name="Scharfe M."/>
            <person name="Scherens B."/>
            <person name="Schramm S."/>
            <person name="Schroeder M."/>
            <person name="Sdicu A.-M."/>
            <person name="Tettelin H."/>
            <person name="Urrestarazu L.A."/>
            <person name="Ushinsky S."/>
            <person name="Vierendeels F."/>
            <person name="Vissers S."/>
            <person name="Voss H."/>
            <person name="Walsh S.V."/>
            <person name="Wambutt R."/>
            <person name="Wang Y."/>
            <person name="Wedler E."/>
            <person name="Wedler H."/>
            <person name="Winnett E."/>
            <person name="Zhong W.-W."/>
            <person name="Zollner A."/>
            <person name="Vo D.H."/>
            <person name="Hani J."/>
        </authorList>
    </citation>
    <scope>NUCLEOTIDE SEQUENCE [LARGE SCALE GENOMIC DNA]</scope>
    <source>
        <strain>ATCC 204508 / S288c</strain>
    </source>
</reference>
<reference key="2">
    <citation type="journal article" date="2014" name="G3 (Bethesda)">
        <title>The reference genome sequence of Saccharomyces cerevisiae: Then and now.</title>
        <authorList>
            <person name="Engel S.R."/>
            <person name="Dietrich F.S."/>
            <person name="Fisk D.G."/>
            <person name="Binkley G."/>
            <person name="Balakrishnan R."/>
            <person name="Costanzo M.C."/>
            <person name="Dwight S.S."/>
            <person name="Hitz B.C."/>
            <person name="Karra K."/>
            <person name="Nash R.S."/>
            <person name="Weng S."/>
            <person name="Wong E.D."/>
            <person name="Lloyd P."/>
            <person name="Skrzypek M.S."/>
            <person name="Miyasato S.R."/>
            <person name="Simison M."/>
            <person name="Cherry J.M."/>
        </authorList>
    </citation>
    <scope>GENOME REANNOTATION</scope>
    <source>
        <strain>ATCC 204508 / S288c</strain>
    </source>
</reference>
<reference key="3">
    <citation type="journal article" date="1998" name="J. Biol. Chem.">
        <title>Y'-Help1, a DNA helicase encoded by the yeast subtelomeric Y' element, is induced in survivors defective for telomerase.</title>
        <authorList>
            <person name="Yamada M."/>
            <person name="Hayatsu N."/>
            <person name="Matsuura A."/>
            <person name="Ishikawa F."/>
        </authorList>
    </citation>
    <scope>FUNCTION</scope>
    <scope>INDUCTION</scope>
</reference>
<sequence>MADTPSVAVQAPPGYGKTELFHLPLIALASKGDVKYVSFLFVPYTVLLANCMIRLGRCGCLNVAPVRNFIEEGCDGVTDLYVGIYDDLASTNFTDRIAAWENIVECTFRTNNVKLGYLIVDEFHNFETEVYRQSQFGGITNLDFDAFEKAIFLSGTAPEAVADAALQRIGLTGLAKKSMDINELKRSEDLSRGLSSYPTRMFNLIKEKSEVPLGHVHKIWKKVESQPEEALKLLLALFEIEPESKAIVVASTTNEVEELACSWRKYFRVVWIHGKLGAAEKVSRTKEFVTDGSMRVLIGTKLVTEGIDIKQLMMVIMLDNRLNIIELIQGVGRLRDGGLCYLLSRKNSWAARNRKGELPPIKEGCITEQVREFYGLESKKGKKGQHVGCCGSRTDLSADTVELIERMDRLAEKQATASMSIVALPSSFQESNSSDRCRKYCSSDEDSNTCIHGSANASTNATTNSSTNATTTASTNVRTSATTTASINVRTSATTTESTNSSTNATTTASTNVRTSATTTASINVRTSATTTESTNSNTSATTTESTDSNTSATTTESTNSSTNATTTASINVRTSATTTESTNSNTNATTTESTNSSTNATTTEGTNSNTSATTTASTNSSTNATTTESTNASAKEDANKDGNAEDNRFHPVTDINKESYKRKGSQMVLLERKKLKAQFPNTSENMNVLQFLGFRSDEIKHLFLYGIDVYFCPEGVFTQYGLCKGCQKMFELCVCWAGQKVSYRRMAWEALAVERMLRNDEEYKEYLEDIEPYHGDPVGYLKYFSVKRGEIYSQIQRNYAWYLAITRRRETISVLDSTRGKQGSQVFRMSGRQIKELYYKVWSNLRESKTEVLQYFLNWDEKKCREEWEAKDDTVFVEALEKVGVFQRLRSMTSAGLQGPQYVKLQFSRHHRQLRSRYELSLGMHLRDQLALGVTPSKVPHWTAFLSMLIGLFCNKTFRQKLEYLLEQISEVWLLPHWLDLANVEVLAADNTRVPLYMLMVAVHKELDSDDVPDGRFDILLCRDSSREVGE</sequence>